<proteinExistence type="inferred from homology"/>
<gene>
    <name evidence="1" type="primary">atpH</name>
</gene>
<accession>Q0G9X5</accession>
<feature type="chain" id="PRO_0000362911" description="ATP synthase subunit c, chloroplastic">
    <location>
        <begin position="1"/>
        <end position="81"/>
    </location>
</feature>
<feature type="transmembrane region" description="Helical" evidence="1">
    <location>
        <begin position="3"/>
        <end position="23"/>
    </location>
</feature>
<feature type="transmembrane region" description="Helical" evidence="1">
    <location>
        <begin position="57"/>
        <end position="77"/>
    </location>
</feature>
<feature type="site" description="Reversibly protonated during proton transport" evidence="1">
    <location>
        <position position="61"/>
    </location>
</feature>
<reference key="1">
    <citation type="journal article" date="2006" name="BMC Genomics">
        <title>Complete plastid genome sequence of Daucus carota: implications for biotechnology and phylogeny of angiosperms.</title>
        <authorList>
            <person name="Ruhlman T."/>
            <person name="Lee S.-B."/>
            <person name="Jansen R.K."/>
            <person name="Hostetler J.B."/>
            <person name="Tallon L.J."/>
            <person name="Town C.D."/>
            <person name="Daniell H."/>
        </authorList>
    </citation>
    <scope>NUCLEOTIDE SEQUENCE [LARGE SCALE GENOMIC DNA]</scope>
    <source>
        <strain>cv. Danvers Half-long</strain>
    </source>
</reference>
<sequence length="81" mass="7990">MNPLISAASVIAAGLAVGLASIGPGVGQGTAAGQAVEGIARQPEAEGKIRGTLLLSLAFMEALTIYGLVVALALLFANPFV</sequence>
<name>ATPH_DAUCA</name>
<evidence type="ECO:0000255" key="1">
    <source>
        <dbReference type="HAMAP-Rule" id="MF_01396"/>
    </source>
</evidence>
<dbReference type="EMBL" id="DQ898156">
    <property type="protein sequence ID" value="ABI32411.1"/>
    <property type="molecule type" value="Genomic_DNA"/>
</dbReference>
<dbReference type="RefSeq" id="YP_740104.1">
    <property type="nucleotide sequence ID" value="NC_008325.1"/>
</dbReference>
<dbReference type="SMR" id="Q0G9X5"/>
<dbReference type="GeneID" id="4266714"/>
<dbReference type="OMA" id="QPELMNE"/>
<dbReference type="GO" id="GO:0009535">
    <property type="term" value="C:chloroplast thylakoid membrane"/>
    <property type="evidence" value="ECO:0007669"/>
    <property type="project" value="UniProtKB-SubCell"/>
</dbReference>
<dbReference type="GO" id="GO:0045259">
    <property type="term" value="C:proton-transporting ATP synthase complex"/>
    <property type="evidence" value="ECO:0007669"/>
    <property type="project" value="UniProtKB-KW"/>
</dbReference>
<dbReference type="GO" id="GO:0033177">
    <property type="term" value="C:proton-transporting two-sector ATPase complex, proton-transporting domain"/>
    <property type="evidence" value="ECO:0007669"/>
    <property type="project" value="InterPro"/>
</dbReference>
<dbReference type="GO" id="GO:0008289">
    <property type="term" value="F:lipid binding"/>
    <property type="evidence" value="ECO:0007669"/>
    <property type="project" value="UniProtKB-KW"/>
</dbReference>
<dbReference type="GO" id="GO:0046933">
    <property type="term" value="F:proton-transporting ATP synthase activity, rotational mechanism"/>
    <property type="evidence" value="ECO:0007669"/>
    <property type="project" value="UniProtKB-UniRule"/>
</dbReference>
<dbReference type="CDD" id="cd18183">
    <property type="entry name" value="ATP-synt_Fo_c_ATPH"/>
    <property type="match status" value="1"/>
</dbReference>
<dbReference type="FunFam" id="1.20.20.10:FF:000001">
    <property type="entry name" value="ATP synthase subunit c, chloroplastic"/>
    <property type="match status" value="1"/>
</dbReference>
<dbReference type="Gene3D" id="1.20.20.10">
    <property type="entry name" value="F1F0 ATP synthase subunit C"/>
    <property type="match status" value="1"/>
</dbReference>
<dbReference type="HAMAP" id="MF_01396">
    <property type="entry name" value="ATP_synth_c_bact"/>
    <property type="match status" value="1"/>
</dbReference>
<dbReference type="InterPro" id="IPR005953">
    <property type="entry name" value="ATP_synth_csu_bac/chlpt"/>
</dbReference>
<dbReference type="InterPro" id="IPR000454">
    <property type="entry name" value="ATP_synth_F0_csu"/>
</dbReference>
<dbReference type="InterPro" id="IPR020537">
    <property type="entry name" value="ATP_synth_F0_csu_DDCD_BS"/>
</dbReference>
<dbReference type="InterPro" id="IPR038662">
    <property type="entry name" value="ATP_synth_F0_csu_sf"/>
</dbReference>
<dbReference type="InterPro" id="IPR002379">
    <property type="entry name" value="ATPase_proteolipid_c-like_dom"/>
</dbReference>
<dbReference type="InterPro" id="IPR035921">
    <property type="entry name" value="F/V-ATP_Csub_sf"/>
</dbReference>
<dbReference type="NCBIfam" id="TIGR01260">
    <property type="entry name" value="ATP_synt_c"/>
    <property type="match status" value="1"/>
</dbReference>
<dbReference type="NCBIfam" id="NF005608">
    <property type="entry name" value="PRK07354.1"/>
    <property type="match status" value="1"/>
</dbReference>
<dbReference type="PANTHER" id="PTHR10031">
    <property type="entry name" value="ATP SYNTHASE LIPID-BINDING PROTEIN, MITOCHONDRIAL"/>
    <property type="match status" value="1"/>
</dbReference>
<dbReference type="PANTHER" id="PTHR10031:SF0">
    <property type="entry name" value="ATPASE PROTEIN 9"/>
    <property type="match status" value="1"/>
</dbReference>
<dbReference type="Pfam" id="PF00137">
    <property type="entry name" value="ATP-synt_C"/>
    <property type="match status" value="1"/>
</dbReference>
<dbReference type="PRINTS" id="PR00124">
    <property type="entry name" value="ATPASEC"/>
</dbReference>
<dbReference type="SUPFAM" id="SSF81333">
    <property type="entry name" value="F1F0 ATP synthase subunit C"/>
    <property type="match status" value="1"/>
</dbReference>
<dbReference type="PROSITE" id="PS00605">
    <property type="entry name" value="ATPASE_C"/>
    <property type="match status" value="1"/>
</dbReference>
<comment type="function">
    <text evidence="1">F(1)F(0) ATP synthase produces ATP from ADP in the presence of a proton or sodium gradient. F-type ATPases consist of two structural domains, F(1) containing the extramembraneous catalytic core and F(0) containing the membrane proton channel, linked together by a central stalk and a peripheral stalk. During catalysis, ATP synthesis in the catalytic domain of F(1) is coupled via a rotary mechanism of the central stalk subunits to proton translocation.</text>
</comment>
<comment type="function">
    <text evidence="1">Key component of the F(0) channel; it plays a direct role in translocation across the membrane. A homomeric c-ring of between 10-14 subunits forms the central stalk rotor element with the F(1) delta and epsilon subunits.</text>
</comment>
<comment type="subunit">
    <text evidence="1">F-type ATPases have 2 components, F(1) - the catalytic core - and F(0) - the membrane proton channel. F(1) has five subunits: alpha(3), beta(3), gamma(1), delta(1), epsilon(1). F(0) has four main subunits: a(1), b(1), b'(1) and c(10-14). The alpha and beta chains form an alternating ring which encloses part of the gamma chain. F(1) is attached to F(0) by a central stalk formed by the gamma and epsilon chains, while a peripheral stalk is formed by the delta, b and b' chains.</text>
</comment>
<comment type="subcellular location">
    <subcellularLocation>
        <location evidence="1">Plastid</location>
        <location evidence="1">Chloroplast thylakoid membrane</location>
        <topology evidence="1">Multi-pass membrane protein</topology>
    </subcellularLocation>
</comment>
<comment type="miscellaneous">
    <text>In plastids the F-type ATPase is also known as CF(1)CF(0).</text>
</comment>
<comment type="similarity">
    <text evidence="1">Belongs to the ATPase C chain family.</text>
</comment>
<organism>
    <name type="scientific">Daucus carota</name>
    <name type="common">Wild carrot</name>
    <dbReference type="NCBI Taxonomy" id="4039"/>
    <lineage>
        <taxon>Eukaryota</taxon>
        <taxon>Viridiplantae</taxon>
        <taxon>Streptophyta</taxon>
        <taxon>Embryophyta</taxon>
        <taxon>Tracheophyta</taxon>
        <taxon>Spermatophyta</taxon>
        <taxon>Magnoliopsida</taxon>
        <taxon>eudicotyledons</taxon>
        <taxon>Gunneridae</taxon>
        <taxon>Pentapetalae</taxon>
        <taxon>asterids</taxon>
        <taxon>campanulids</taxon>
        <taxon>Apiales</taxon>
        <taxon>Apiaceae</taxon>
        <taxon>Apioideae</taxon>
        <taxon>Scandiceae</taxon>
        <taxon>Daucinae</taxon>
        <taxon>Daucus</taxon>
        <taxon>Daucus sect. Daucus</taxon>
    </lineage>
</organism>
<keyword id="KW-0066">ATP synthesis</keyword>
<keyword id="KW-0138">CF(0)</keyword>
<keyword id="KW-0150">Chloroplast</keyword>
<keyword id="KW-0375">Hydrogen ion transport</keyword>
<keyword id="KW-0406">Ion transport</keyword>
<keyword id="KW-0446">Lipid-binding</keyword>
<keyword id="KW-0472">Membrane</keyword>
<keyword id="KW-0934">Plastid</keyword>
<keyword id="KW-0793">Thylakoid</keyword>
<keyword id="KW-0812">Transmembrane</keyword>
<keyword id="KW-1133">Transmembrane helix</keyword>
<keyword id="KW-0813">Transport</keyword>
<protein>
    <recommendedName>
        <fullName evidence="1">ATP synthase subunit c, chloroplastic</fullName>
    </recommendedName>
    <alternativeName>
        <fullName evidence="1">ATP synthase F(0) sector subunit c</fullName>
    </alternativeName>
    <alternativeName>
        <fullName evidence="1">ATPase subunit III</fullName>
    </alternativeName>
    <alternativeName>
        <fullName evidence="1">F-type ATPase subunit c</fullName>
        <shortName evidence="1">F-ATPase subunit c</shortName>
    </alternativeName>
    <alternativeName>
        <fullName evidence="1">Lipid-binding protein</fullName>
    </alternativeName>
</protein>
<geneLocation type="chloroplast"/>